<organism>
    <name type="scientific">Shewanella sediminis (strain HAW-EB3)</name>
    <dbReference type="NCBI Taxonomy" id="425104"/>
    <lineage>
        <taxon>Bacteria</taxon>
        <taxon>Pseudomonadati</taxon>
        <taxon>Pseudomonadota</taxon>
        <taxon>Gammaproteobacteria</taxon>
        <taxon>Alteromonadales</taxon>
        <taxon>Shewanellaceae</taxon>
        <taxon>Shewanella</taxon>
    </lineage>
</organism>
<feature type="chain" id="PRO_1000086462" description="Large ribosomal subunit protein uL3">
    <location>
        <begin position="1"/>
        <end position="212"/>
    </location>
</feature>
<feature type="modified residue" description="N5-methylglutamine" evidence="1">
    <location>
        <position position="153"/>
    </location>
</feature>
<accession>A8G1E8</accession>
<dbReference type="EMBL" id="CP000821">
    <property type="protein sequence ID" value="ABV38921.1"/>
    <property type="molecule type" value="Genomic_DNA"/>
</dbReference>
<dbReference type="RefSeq" id="WP_012144649.1">
    <property type="nucleotide sequence ID" value="NC_009831.1"/>
</dbReference>
<dbReference type="SMR" id="A8G1E8"/>
<dbReference type="STRING" id="425104.Ssed_4317"/>
<dbReference type="KEGG" id="sse:Ssed_4317"/>
<dbReference type="eggNOG" id="COG0087">
    <property type="taxonomic scope" value="Bacteria"/>
</dbReference>
<dbReference type="HOGENOM" id="CLU_044142_4_1_6"/>
<dbReference type="OrthoDB" id="9806135at2"/>
<dbReference type="Proteomes" id="UP000002015">
    <property type="component" value="Chromosome"/>
</dbReference>
<dbReference type="GO" id="GO:0022625">
    <property type="term" value="C:cytosolic large ribosomal subunit"/>
    <property type="evidence" value="ECO:0007669"/>
    <property type="project" value="TreeGrafter"/>
</dbReference>
<dbReference type="GO" id="GO:0019843">
    <property type="term" value="F:rRNA binding"/>
    <property type="evidence" value="ECO:0007669"/>
    <property type="project" value="UniProtKB-UniRule"/>
</dbReference>
<dbReference type="GO" id="GO:0003735">
    <property type="term" value="F:structural constituent of ribosome"/>
    <property type="evidence" value="ECO:0007669"/>
    <property type="project" value="InterPro"/>
</dbReference>
<dbReference type="GO" id="GO:0006412">
    <property type="term" value="P:translation"/>
    <property type="evidence" value="ECO:0007669"/>
    <property type="project" value="UniProtKB-UniRule"/>
</dbReference>
<dbReference type="FunFam" id="2.40.30.10:FF:000004">
    <property type="entry name" value="50S ribosomal protein L3"/>
    <property type="match status" value="1"/>
</dbReference>
<dbReference type="FunFam" id="3.30.160.810:FF:000001">
    <property type="entry name" value="50S ribosomal protein L3"/>
    <property type="match status" value="1"/>
</dbReference>
<dbReference type="Gene3D" id="3.30.160.810">
    <property type="match status" value="1"/>
</dbReference>
<dbReference type="Gene3D" id="2.40.30.10">
    <property type="entry name" value="Translation factors"/>
    <property type="match status" value="1"/>
</dbReference>
<dbReference type="HAMAP" id="MF_01325_B">
    <property type="entry name" value="Ribosomal_uL3_B"/>
    <property type="match status" value="1"/>
</dbReference>
<dbReference type="InterPro" id="IPR000597">
    <property type="entry name" value="Ribosomal_uL3"/>
</dbReference>
<dbReference type="InterPro" id="IPR019927">
    <property type="entry name" value="Ribosomal_uL3_bac/org-type"/>
</dbReference>
<dbReference type="InterPro" id="IPR019926">
    <property type="entry name" value="Ribosomal_uL3_CS"/>
</dbReference>
<dbReference type="InterPro" id="IPR009000">
    <property type="entry name" value="Transl_B-barrel_sf"/>
</dbReference>
<dbReference type="NCBIfam" id="TIGR03625">
    <property type="entry name" value="L3_bact"/>
    <property type="match status" value="1"/>
</dbReference>
<dbReference type="PANTHER" id="PTHR11229">
    <property type="entry name" value="50S RIBOSOMAL PROTEIN L3"/>
    <property type="match status" value="1"/>
</dbReference>
<dbReference type="PANTHER" id="PTHR11229:SF16">
    <property type="entry name" value="LARGE RIBOSOMAL SUBUNIT PROTEIN UL3C"/>
    <property type="match status" value="1"/>
</dbReference>
<dbReference type="Pfam" id="PF00297">
    <property type="entry name" value="Ribosomal_L3"/>
    <property type="match status" value="1"/>
</dbReference>
<dbReference type="SUPFAM" id="SSF50447">
    <property type="entry name" value="Translation proteins"/>
    <property type="match status" value="1"/>
</dbReference>
<dbReference type="PROSITE" id="PS00474">
    <property type="entry name" value="RIBOSOMAL_L3"/>
    <property type="match status" value="1"/>
</dbReference>
<gene>
    <name evidence="1" type="primary">rplC</name>
    <name type="ordered locus">Ssed_4317</name>
</gene>
<name>RL3_SHESH</name>
<comment type="function">
    <text evidence="1">One of the primary rRNA binding proteins, it binds directly near the 3'-end of the 23S rRNA, where it nucleates assembly of the 50S subunit.</text>
</comment>
<comment type="subunit">
    <text evidence="1">Part of the 50S ribosomal subunit. Forms a cluster with proteins L14 and L19.</text>
</comment>
<comment type="PTM">
    <text evidence="1">Methylated by PrmB.</text>
</comment>
<comment type="similarity">
    <text evidence="1">Belongs to the universal ribosomal protein uL3 family.</text>
</comment>
<reference key="1">
    <citation type="submission" date="2007-08" db="EMBL/GenBank/DDBJ databases">
        <title>Complete sequence of Shewanella sediminis HAW-EB3.</title>
        <authorList>
            <consortium name="US DOE Joint Genome Institute"/>
            <person name="Copeland A."/>
            <person name="Lucas S."/>
            <person name="Lapidus A."/>
            <person name="Barry K."/>
            <person name="Glavina del Rio T."/>
            <person name="Dalin E."/>
            <person name="Tice H."/>
            <person name="Pitluck S."/>
            <person name="Chertkov O."/>
            <person name="Brettin T."/>
            <person name="Bruce D."/>
            <person name="Detter J.C."/>
            <person name="Han C."/>
            <person name="Schmutz J."/>
            <person name="Larimer F."/>
            <person name="Land M."/>
            <person name="Hauser L."/>
            <person name="Kyrpides N."/>
            <person name="Kim E."/>
            <person name="Zhao J.-S."/>
            <person name="Richardson P."/>
        </authorList>
    </citation>
    <scope>NUCLEOTIDE SEQUENCE [LARGE SCALE GENOMIC DNA]</scope>
    <source>
        <strain>HAW-EB3</strain>
    </source>
</reference>
<evidence type="ECO:0000255" key="1">
    <source>
        <dbReference type="HAMAP-Rule" id="MF_01325"/>
    </source>
</evidence>
<evidence type="ECO:0000305" key="2"/>
<protein>
    <recommendedName>
        <fullName evidence="1">Large ribosomal subunit protein uL3</fullName>
    </recommendedName>
    <alternativeName>
        <fullName evidence="2">50S ribosomal protein L3</fullName>
    </alternativeName>
</protein>
<keyword id="KW-0488">Methylation</keyword>
<keyword id="KW-1185">Reference proteome</keyword>
<keyword id="KW-0687">Ribonucleoprotein</keyword>
<keyword id="KW-0689">Ribosomal protein</keyword>
<keyword id="KW-0694">RNA-binding</keyword>
<keyword id="KW-0699">rRNA-binding</keyword>
<proteinExistence type="inferred from homology"/>
<sequence>MAIGLIGRKVGMTRIFAEDGVSIPVTVIEIASNRVTQVKTLETDGYRALQVTTGTKKANRITKPEAGHFAKAGVEAGRGLWEVRLADGEGESIEVGAELNVDIFADVAKVDVTGQSKGKGFQGGIKRWNFHAQDMTHGNSLAHRSNGSIGQNQTPGRVFKGKKMSGHMGAERVTTQNLDVVRVDAERNLLLVKGAVPGATNGNLIIKPAVKA</sequence>